<keyword id="KW-0002">3D-structure</keyword>
<keyword id="KW-0067">ATP-binding</keyword>
<keyword id="KW-1003">Cell membrane</keyword>
<keyword id="KW-0472">Membrane</keyword>
<keyword id="KW-0547">Nucleotide-binding</keyword>
<keyword id="KW-0677">Repeat</keyword>
<keyword id="KW-0812">Transmembrane</keyword>
<keyword id="KW-1133">Transmembrane helix</keyword>
<keyword id="KW-0843">Virulence</keyword>
<comment type="function">
    <text evidence="2">Component of the type VII secretion system (Ess). Required for the secretion of substrates including EsxA and EsxB. However, unable to support secretion of the substrate protein EsxC.</text>
</comment>
<comment type="subunit">
    <text evidence="2">Homooligomer. Interacts with EsaE.</text>
</comment>
<comment type="subcellular location">
    <subcellularLocation>
        <location evidence="2">Cell membrane</location>
        <topology evidence="3">Multi-pass membrane protein</topology>
    </subcellularLocation>
</comment>
<comment type="domain">
    <text evidence="5">The N-terminal region is composed of two iterations of forkhead-associated (FHA) domain-like structures, which could interact with other proteins in the Esx secretion system.</text>
</comment>
<comment type="similarity">
    <text evidence="7">Belongs to the EssC family.</text>
</comment>
<proteinExistence type="evidence at protein level"/>
<dbReference type="EMBL" id="BA000017">
    <property type="protein sequence ID" value="BAB56449.2"/>
    <property type="molecule type" value="Genomic_DNA"/>
</dbReference>
<dbReference type="RefSeq" id="WP_000549287.1">
    <property type="nucleotide sequence ID" value="NC_002758.2"/>
</dbReference>
<dbReference type="PDB" id="1WV3">
    <property type="method" value="X-ray"/>
    <property type="resolution" value="1.75 A"/>
    <property type="chains" value="A=1-230"/>
</dbReference>
<dbReference type="PDBsum" id="1WV3"/>
<dbReference type="SMR" id="Q932J9"/>
<dbReference type="TCDB" id="3.A.7.17.1">
    <property type="family name" value="the type iv (conjugal dna-protein transfer or virb) secretory pathway (ivsp) family"/>
</dbReference>
<dbReference type="KEGG" id="sav:SAV0287"/>
<dbReference type="HOGENOM" id="CLU_003134_2_1_9"/>
<dbReference type="PhylomeDB" id="Q932J9"/>
<dbReference type="Proteomes" id="UP000002481">
    <property type="component" value="Chromosome"/>
</dbReference>
<dbReference type="GO" id="GO:0005886">
    <property type="term" value="C:plasma membrane"/>
    <property type="evidence" value="ECO:0007669"/>
    <property type="project" value="UniProtKB-SubCell"/>
</dbReference>
<dbReference type="GO" id="GO:0005524">
    <property type="term" value="F:ATP binding"/>
    <property type="evidence" value="ECO:0007669"/>
    <property type="project" value="UniProtKB-KW"/>
</dbReference>
<dbReference type="GO" id="GO:0003677">
    <property type="term" value="F:DNA binding"/>
    <property type="evidence" value="ECO:0007669"/>
    <property type="project" value="InterPro"/>
</dbReference>
<dbReference type="CDD" id="cd01127">
    <property type="entry name" value="TrwB_TraG_TraD_VirD4"/>
    <property type="match status" value="1"/>
</dbReference>
<dbReference type="Gene3D" id="2.60.200.20">
    <property type="match status" value="2"/>
</dbReference>
<dbReference type="Gene3D" id="3.40.50.300">
    <property type="entry name" value="P-loop containing nucleotide triphosphate hydrolases"/>
    <property type="match status" value="2"/>
</dbReference>
<dbReference type="InterPro" id="IPR023839">
    <property type="entry name" value="Firmicutes_EssC_C"/>
</dbReference>
<dbReference type="InterPro" id="IPR022206">
    <property type="entry name" value="Firmicutes_EssC_N"/>
</dbReference>
<dbReference type="InterPro" id="IPR050206">
    <property type="entry name" value="FtsK/SpoIIIE/SftA"/>
</dbReference>
<dbReference type="InterPro" id="IPR002543">
    <property type="entry name" value="FtsK_dom"/>
</dbReference>
<dbReference type="InterPro" id="IPR027417">
    <property type="entry name" value="P-loop_NTPase"/>
</dbReference>
<dbReference type="InterPro" id="IPR008984">
    <property type="entry name" value="SMAD_FHA_dom_sf"/>
</dbReference>
<dbReference type="NCBIfam" id="TIGR03928">
    <property type="entry name" value="T7_EssCb_Firm"/>
    <property type="match status" value="1"/>
</dbReference>
<dbReference type="PANTHER" id="PTHR22683:SF41">
    <property type="entry name" value="DNA TRANSLOCASE FTSK"/>
    <property type="match status" value="1"/>
</dbReference>
<dbReference type="PANTHER" id="PTHR22683">
    <property type="entry name" value="SPORULATION PROTEIN RELATED"/>
    <property type="match status" value="1"/>
</dbReference>
<dbReference type="Pfam" id="PF01580">
    <property type="entry name" value="FtsK_SpoIIIE"/>
    <property type="match status" value="2"/>
</dbReference>
<dbReference type="Pfam" id="PF12538">
    <property type="entry name" value="FtsK_SpoIIIE_N"/>
    <property type="match status" value="1"/>
</dbReference>
<dbReference type="SUPFAM" id="SSF52540">
    <property type="entry name" value="P-loop containing nucleoside triphosphate hydrolases"/>
    <property type="match status" value="2"/>
</dbReference>
<dbReference type="SUPFAM" id="SSF49879">
    <property type="entry name" value="SMAD/FHA domain"/>
    <property type="match status" value="2"/>
</dbReference>
<dbReference type="PROSITE" id="PS50901">
    <property type="entry name" value="FTSK"/>
    <property type="match status" value="2"/>
</dbReference>
<sequence>MHKLIIKYNKQLKMLNLRDGKTYTISEDERADITLKSLGEVIHLEQNNQGTWQANHTSINKVLVRKGDLDDITLQLYTEADYASFAYPSIQDTMTIGPNAYDDMVIQSLMNAIIIKDFQSIQESQYVRIVHDKNTDVYINYELQEQLTNKAYIGDHIYVEGIWLEVQADGLNVLSQNTVASSLIRLTQEMPHAQADDYNTYHRSPRIIHREPTDDIKIERPPQPIQKNNTVIWRSIIPPLVMIALTVVIFLVRPIGIYILMMIGMSTVTIVFGITTYFSEKKKYNKDVEKREKDYKAYLDNKSKEINKAIKAQRFSLNYHYPTVAEIKDIVETKAPRIYEKTSHHHDFLHYKLGIANVEKSFKLDYQEEEFNQRRDELFDDAKELYEFYTDVEQAPLINDLNHGPIAYIGARHLILEELEKMLIQLSTFHSYHDLEFLFVTREDEVETLKWARWLPHMTLRGQNIRGFVYNQRTRDQILTSIYSMIKERIQAVRERSRSNEQIIFTPQLVFVITDMSLIIDHVILEYVNQDLSEYGISLIFVEDVIESLPEHVDTIIDIKSRTEGELITKEKELVQLKFTPENIDNVDKEYIARRLANLIHVEHLKNAIPDSITFLEMYNVKEVDQLDVVNRWRQNETYKTMAVPLGVRGKDDILSLNLHEKAHGPHGLVAGTTGSGKSEIIQSYILSLAINFHPHEVAFLLIDYKGGGMANLFKDLVHLVGTITNLDGDEAMRALTSIKAELRKRQRLFGEHDVNHINQYHKLFKEGVATEPMPHLFIISDEFAELKSEQPDFMKELVSTARIGRSLGIHLILATQKPSGVVDDQIWSNSKFKLALKVQDRQDSNEILKTPDAADITLPGRAYLQVGNNEIYELFQSAWSGATYDIEGDKLEVEDKTIYMINDYGQLQAINKDLSGLEDEETKENQTELEAVIDHIESITTRLEIEEVKRPWLPPLPENVYQEDLVETDFRKLWSDDAKEVELTLGLKDVPEEQYQGPMVLQLKKAGHIALIGSPGYGRTTFLHNIIFDVARHHRPDQAHMYLFDFGTNGLMPVTDIPHVADYFTVDQEDKIAKAIRIFNDEIDRRKKILSQYRVTSISEYRKLTGETIPYVFILIDNFDAVKDSPFQEVFENMMIKMTREGLALDMQVTLTASRANAMKTPMYINMKTRIAMFLYDKSEVSNVVGQQKFAVKDVVGRALLSSDDNVSFHIGQPFKHDETKSYNDQINDEVSAMTEFYKGETPNDIPMMPDEIKYEDYRESLSLPDIVANGALPIGLDYEGVTLQKIKLTEPAMISSENPREIAHIAEIMMKEIDILNEKYAICIADSSGEFKAYRHQVANFAEEREDIKAIHQLMIEDLKQREMDGPFEKDSLYIINDFKTYIDCTYIPEDDVKKLITKGPELGLNILFVGIHKELIDAYDKQIDVARKMINQFSIGIRISDQQFFKFRFIQREPVIKENEAYMVANQAYQKIRWFK</sequence>
<protein>
    <recommendedName>
        <fullName evidence="7">Type VII secretion system protein EssC</fullName>
    </recommendedName>
</protein>
<evidence type="ECO:0000250" key="1">
    <source>
        <dbReference type="UniProtKB" id="P0C048"/>
    </source>
</evidence>
<evidence type="ECO:0000250" key="2">
    <source>
        <dbReference type="UniProtKB" id="Q2G184"/>
    </source>
</evidence>
<evidence type="ECO:0000255" key="3"/>
<evidence type="ECO:0000255" key="4">
    <source>
        <dbReference type="PROSITE-ProRule" id="PRU00289"/>
    </source>
</evidence>
<evidence type="ECO:0000269" key="5">
    <source>
    </source>
</evidence>
<evidence type="ECO:0000303" key="6">
    <source>
    </source>
</evidence>
<evidence type="ECO:0000305" key="7"/>
<evidence type="ECO:0007744" key="8">
    <source>
        <dbReference type="PDB" id="1WV3"/>
    </source>
</evidence>
<accession>Q932J9</accession>
<gene>
    <name evidence="6" type="primary">essC</name>
    <name type="ordered locus">SAV0287</name>
</gene>
<reference key="1">
    <citation type="journal article" date="2001" name="Lancet">
        <title>Whole genome sequencing of meticillin-resistant Staphylococcus aureus.</title>
        <authorList>
            <person name="Kuroda M."/>
            <person name="Ohta T."/>
            <person name="Uchiyama I."/>
            <person name="Baba T."/>
            <person name="Yuzawa H."/>
            <person name="Kobayashi I."/>
            <person name="Cui L."/>
            <person name="Oguchi A."/>
            <person name="Aoki K."/>
            <person name="Nagai Y."/>
            <person name="Lian J.-Q."/>
            <person name="Ito T."/>
            <person name="Kanamori M."/>
            <person name="Matsumaru H."/>
            <person name="Maruyama A."/>
            <person name="Murakami H."/>
            <person name="Hosoyama A."/>
            <person name="Mizutani-Ui Y."/>
            <person name="Takahashi N.K."/>
            <person name="Sawano T."/>
            <person name="Inoue R."/>
            <person name="Kaito C."/>
            <person name="Sekimizu K."/>
            <person name="Hirakawa H."/>
            <person name="Kuhara S."/>
            <person name="Goto S."/>
            <person name="Yabuzaki J."/>
            <person name="Kanehisa M."/>
            <person name="Yamashita A."/>
            <person name="Oshima K."/>
            <person name="Furuya K."/>
            <person name="Yoshino C."/>
            <person name="Shiba T."/>
            <person name="Hattori M."/>
            <person name="Ogasawara N."/>
            <person name="Hayashi H."/>
            <person name="Hiramatsu K."/>
        </authorList>
    </citation>
    <scope>NUCLEOTIDE SEQUENCE [LARGE SCALE GENOMIC DNA]</scope>
    <source>
        <strain>Mu50 / ATCC 700699</strain>
    </source>
</reference>
<reference evidence="8" key="2">
    <citation type="journal article" date="2007" name="Proteins">
        <title>Crystal structure analysis reveals a novel forkhead-associated domain of ESAT-6 secretion system C protein in Staphylococcus aureus.</title>
        <authorList>
            <person name="Tanaka Y."/>
            <person name="Kuroda M."/>
            <person name="Yasutake Y."/>
            <person name="Yao M."/>
            <person name="Tsumoto K."/>
            <person name="Watanabe N."/>
            <person name="Ohta T."/>
            <person name="Tanaka I."/>
        </authorList>
    </citation>
    <scope>X-RAY CRYSTALLOGRAPHY (1.75 ANGSTROMS) OF 1-230</scope>
    <scope>DOMAIN</scope>
    <source>
        <strain>Mu50 / ATCC 700699</strain>
    </source>
</reference>
<organism>
    <name type="scientific">Staphylococcus aureus (strain Mu50 / ATCC 700699)</name>
    <dbReference type="NCBI Taxonomy" id="158878"/>
    <lineage>
        <taxon>Bacteria</taxon>
        <taxon>Bacillati</taxon>
        <taxon>Bacillota</taxon>
        <taxon>Bacilli</taxon>
        <taxon>Bacillales</taxon>
        <taxon>Staphylococcaceae</taxon>
        <taxon>Staphylococcus</taxon>
    </lineage>
</organism>
<name>ESSC_STAAM</name>
<feature type="chain" id="PRO_0000098330" description="Type VII secretion system protein EssC">
    <location>
        <begin position="1"/>
        <end position="1479"/>
    </location>
</feature>
<feature type="topological domain" description="Cytoplasmic" evidence="1">
    <location>
        <begin position="1"/>
        <end position="229"/>
    </location>
</feature>
<feature type="transmembrane region" description="Helical" evidence="3">
    <location>
        <begin position="230"/>
        <end position="252"/>
    </location>
</feature>
<feature type="topological domain" description="Extracellular" evidence="1">
    <location>
        <begin position="253"/>
        <end position="256"/>
    </location>
</feature>
<feature type="transmembrane region" description="Helical" evidence="3">
    <location>
        <begin position="257"/>
        <end position="279"/>
    </location>
</feature>
<feature type="topological domain" description="Cytoplasmic" evidence="1">
    <location>
        <begin position="280"/>
        <end position="1479"/>
    </location>
</feature>
<feature type="domain" description="FtsK 1" evidence="4">
    <location>
        <begin position="652"/>
        <end position="846"/>
    </location>
</feature>
<feature type="domain" description="FtsK 2" evidence="4">
    <location>
        <begin position="997"/>
        <end position="1183"/>
    </location>
</feature>
<feature type="binding site" evidence="4">
    <location>
        <begin position="672"/>
        <end position="679"/>
    </location>
    <ligand>
        <name>ATP</name>
        <dbReference type="ChEBI" id="CHEBI:30616"/>
    </ligand>
</feature>
<feature type="binding site" evidence="4">
    <location>
        <begin position="1014"/>
        <end position="1021"/>
    </location>
    <ligand>
        <name>ATP</name>
        <dbReference type="ChEBI" id="CHEBI:30616"/>
    </ligand>
</feature>